<gene>
    <name evidence="1" type="primary">xpt</name>
    <name type="ordered locus">LSEI_1117</name>
</gene>
<sequence>MKLLEDRIKKDGQVIGTDVLKVDNFLNHQVDPDLMADLGHEFYRRFSNEPITKILTVESSGIAPAIATAMEFHKPLVFARKHKSLTLKDHLYTATVYSFTKKTSNEIAISRKFLSADDNVLIIDDFLANGQAVEGLMDIIAQAGATLSGVGIVIEKTFQKGRKLLDEKHVRVESLARINAFENGQVIFAPED</sequence>
<keyword id="KW-0963">Cytoplasm</keyword>
<keyword id="KW-0328">Glycosyltransferase</keyword>
<keyword id="KW-0660">Purine salvage</keyword>
<keyword id="KW-1185">Reference proteome</keyword>
<keyword id="KW-0808">Transferase</keyword>
<proteinExistence type="inferred from homology"/>
<feature type="chain" id="PRO_0000339703" description="Xanthine phosphoribosyltransferase">
    <location>
        <begin position="1"/>
        <end position="192"/>
    </location>
</feature>
<feature type="binding site" evidence="1">
    <location>
        <position position="20"/>
    </location>
    <ligand>
        <name>xanthine</name>
        <dbReference type="ChEBI" id="CHEBI:17712"/>
    </ligand>
</feature>
<feature type="binding site" evidence="1">
    <location>
        <position position="27"/>
    </location>
    <ligand>
        <name>xanthine</name>
        <dbReference type="ChEBI" id="CHEBI:17712"/>
    </ligand>
</feature>
<feature type="binding site" evidence="1">
    <location>
        <begin position="128"/>
        <end position="132"/>
    </location>
    <ligand>
        <name>5-phospho-alpha-D-ribose 1-diphosphate</name>
        <dbReference type="ChEBI" id="CHEBI:58017"/>
    </ligand>
</feature>
<feature type="binding site" evidence="1">
    <location>
        <position position="156"/>
    </location>
    <ligand>
        <name>xanthine</name>
        <dbReference type="ChEBI" id="CHEBI:17712"/>
    </ligand>
</feature>
<name>XPT_LACP3</name>
<accession>Q03A64</accession>
<protein>
    <recommendedName>
        <fullName evidence="1">Xanthine phosphoribosyltransferase</fullName>
        <shortName evidence="1">XPRTase</shortName>
        <ecNumber evidence="1">2.4.2.22</ecNumber>
    </recommendedName>
</protein>
<organism>
    <name type="scientific">Lacticaseibacillus paracasei (strain ATCC 334 / BCRC 17002 / CCUG 31169 / CIP 107868 / KCTC 3260 / NRRL B-441)</name>
    <name type="common">Lactobacillus paracasei</name>
    <dbReference type="NCBI Taxonomy" id="321967"/>
    <lineage>
        <taxon>Bacteria</taxon>
        <taxon>Bacillati</taxon>
        <taxon>Bacillota</taxon>
        <taxon>Bacilli</taxon>
        <taxon>Lactobacillales</taxon>
        <taxon>Lactobacillaceae</taxon>
        <taxon>Lacticaseibacillus</taxon>
    </lineage>
</organism>
<reference key="1">
    <citation type="journal article" date="2006" name="Proc. Natl. Acad. Sci. U.S.A.">
        <title>Comparative genomics of the lactic acid bacteria.</title>
        <authorList>
            <person name="Makarova K.S."/>
            <person name="Slesarev A."/>
            <person name="Wolf Y.I."/>
            <person name="Sorokin A."/>
            <person name="Mirkin B."/>
            <person name="Koonin E.V."/>
            <person name="Pavlov A."/>
            <person name="Pavlova N."/>
            <person name="Karamychev V."/>
            <person name="Polouchine N."/>
            <person name="Shakhova V."/>
            <person name="Grigoriev I."/>
            <person name="Lou Y."/>
            <person name="Rohksar D."/>
            <person name="Lucas S."/>
            <person name="Huang K."/>
            <person name="Goodstein D.M."/>
            <person name="Hawkins T."/>
            <person name="Plengvidhya V."/>
            <person name="Welker D."/>
            <person name="Hughes J."/>
            <person name="Goh Y."/>
            <person name="Benson A."/>
            <person name="Baldwin K."/>
            <person name="Lee J.-H."/>
            <person name="Diaz-Muniz I."/>
            <person name="Dosti B."/>
            <person name="Smeianov V."/>
            <person name="Wechter W."/>
            <person name="Barabote R."/>
            <person name="Lorca G."/>
            <person name="Altermann E."/>
            <person name="Barrangou R."/>
            <person name="Ganesan B."/>
            <person name="Xie Y."/>
            <person name="Rawsthorne H."/>
            <person name="Tamir D."/>
            <person name="Parker C."/>
            <person name="Breidt F."/>
            <person name="Broadbent J.R."/>
            <person name="Hutkins R."/>
            <person name="O'Sullivan D."/>
            <person name="Steele J."/>
            <person name="Unlu G."/>
            <person name="Saier M.H. Jr."/>
            <person name="Klaenhammer T."/>
            <person name="Richardson P."/>
            <person name="Kozyavkin S."/>
            <person name="Weimer B.C."/>
            <person name="Mills D.A."/>
        </authorList>
    </citation>
    <scope>NUCLEOTIDE SEQUENCE [LARGE SCALE GENOMIC DNA]</scope>
    <source>
        <strain>ATCC 334 / BCRC 17002 / CCUG 31169 / CIP 107868 / KCTC 3260 / NRRL B-441</strain>
    </source>
</reference>
<dbReference type="EC" id="2.4.2.22" evidence="1"/>
<dbReference type="EMBL" id="CP000423">
    <property type="protein sequence ID" value="ABJ69908.1"/>
    <property type="status" value="ALT_INIT"/>
    <property type="molecule type" value="Genomic_DNA"/>
</dbReference>
<dbReference type="RefSeq" id="WP_003566514.1">
    <property type="nucleotide sequence ID" value="NC_008526.1"/>
</dbReference>
<dbReference type="RefSeq" id="YP_806350.1">
    <property type="nucleotide sequence ID" value="NC_008526.1"/>
</dbReference>
<dbReference type="SMR" id="Q03A64"/>
<dbReference type="STRING" id="321967.LSEI_1117"/>
<dbReference type="PaxDb" id="321967-LSEI_1117"/>
<dbReference type="KEGG" id="lca:LSEI_1117"/>
<dbReference type="PATRIC" id="fig|321967.11.peg.1089"/>
<dbReference type="HOGENOM" id="CLU_099015_0_0_9"/>
<dbReference type="UniPathway" id="UPA00602">
    <property type="reaction ID" value="UER00658"/>
</dbReference>
<dbReference type="Proteomes" id="UP000001651">
    <property type="component" value="Chromosome"/>
</dbReference>
<dbReference type="GO" id="GO:0005737">
    <property type="term" value="C:cytoplasm"/>
    <property type="evidence" value="ECO:0007669"/>
    <property type="project" value="UniProtKB-SubCell"/>
</dbReference>
<dbReference type="GO" id="GO:0000310">
    <property type="term" value="F:xanthine phosphoribosyltransferase activity"/>
    <property type="evidence" value="ECO:0007669"/>
    <property type="project" value="UniProtKB-UniRule"/>
</dbReference>
<dbReference type="GO" id="GO:0006166">
    <property type="term" value="P:purine ribonucleoside salvage"/>
    <property type="evidence" value="ECO:0007669"/>
    <property type="project" value="UniProtKB-KW"/>
</dbReference>
<dbReference type="GO" id="GO:0046110">
    <property type="term" value="P:xanthine metabolic process"/>
    <property type="evidence" value="ECO:0007669"/>
    <property type="project" value="InterPro"/>
</dbReference>
<dbReference type="GO" id="GO:0032265">
    <property type="term" value="P:XMP salvage"/>
    <property type="evidence" value="ECO:0007669"/>
    <property type="project" value="UniProtKB-UniRule"/>
</dbReference>
<dbReference type="CDD" id="cd06223">
    <property type="entry name" value="PRTases_typeI"/>
    <property type="match status" value="1"/>
</dbReference>
<dbReference type="Gene3D" id="3.40.50.2020">
    <property type="match status" value="1"/>
</dbReference>
<dbReference type="HAMAP" id="MF_01184">
    <property type="entry name" value="XPRTase"/>
    <property type="match status" value="1"/>
</dbReference>
<dbReference type="InterPro" id="IPR000836">
    <property type="entry name" value="PRibTrfase_dom"/>
</dbReference>
<dbReference type="InterPro" id="IPR029057">
    <property type="entry name" value="PRTase-like"/>
</dbReference>
<dbReference type="InterPro" id="IPR050118">
    <property type="entry name" value="Pur/Pyrimidine_PRTase"/>
</dbReference>
<dbReference type="InterPro" id="IPR010079">
    <property type="entry name" value="Xanthine_PRibTrfase"/>
</dbReference>
<dbReference type="NCBIfam" id="NF006671">
    <property type="entry name" value="PRK09219.1"/>
    <property type="match status" value="1"/>
</dbReference>
<dbReference type="NCBIfam" id="TIGR01744">
    <property type="entry name" value="XPRTase"/>
    <property type="match status" value="1"/>
</dbReference>
<dbReference type="PANTHER" id="PTHR43864">
    <property type="entry name" value="HYPOXANTHINE/GUANINE PHOSPHORIBOSYLTRANSFERASE"/>
    <property type="match status" value="1"/>
</dbReference>
<dbReference type="PANTHER" id="PTHR43864:SF1">
    <property type="entry name" value="XANTHINE PHOSPHORIBOSYLTRANSFERASE"/>
    <property type="match status" value="1"/>
</dbReference>
<dbReference type="Pfam" id="PF00156">
    <property type="entry name" value="Pribosyltran"/>
    <property type="match status" value="1"/>
</dbReference>
<dbReference type="SUPFAM" id="SSF53271">
    <property type="entry name" value="PRTase-like"/>
    <property type="match status" value="1"/>
</dbReference>
<comment type="function">
    <text evidence="1">Converts the preformed base xanthine, a product of nucleic acid breakdown, to xanthosine 5'-monophosphate (XMP), so it can be reused for RNA or DNA synthesis.</text>
</comment>
<comment type="catalytic activity">
    <reaction evidence="1">
        <text>XMP + diphosphate = xanthine + 5-phospho-alpha-D-ribose 1-diphosphate</text>
        <dbReference type="Rhea" id="RHEA:10800"/>
        <dbReference type="ChEBI" id="CHEBI:17712"/>
        <dbReference type="ChEBI" id="CHEBI:33019"/>
        <dbReference type="ChEBI" id="CHEBI:57464"/>
        <dbReference type="ChEBI" id="CHEBI:58017"/>
        <dbReference type="EC" id="2.4.2.22"/>
    </reaction>
</comment>
<comment type="pathway">
    <text evidence="1">Purine metabolism; XMP biosynthesis via salvage pathway; XMP from xanthine: step 1/1.</text>
</comment>
<comment type="subunit">
    <text evidence="1">Homodimer.</text>
</comment>
<comment type="subcellular location">
    <subcellularLocation>
        <location evidence="1">Cytoplasm</location>
    </subcellularLocation>
</comment>
<comment type="similarity">
    <text evidence="1">Belongs to the purine/pyrimidine phosphoribosyltransferase family. Xpt subfamily.</text>
</comment>
<comment type="sequence caution" evidence="2">
    <conflict type="erroneous initiation">
        <sequence resource="EMBL-CDS" id="ABJ69908"/>
    </conflict>
</comment>
<evidence type="ECO:0000255" key="1">
    <source>
        <dbReference type="HAMAP-Rule" id="MF_01184"/>
    </source>
</evidence>
<evidence type="ECO:0000305" key="2"/>